<protein>
    <recommendedName>
        <fullName evidence="1">Glycerol-3-phosphate acyltransferase</fullName>
    </recommendedName>
    <alternativeName>
        <fullName evidence="1">Acyl-PO4 G3P acyltransferase</fullName>
    </alternativeName>
    <alternativeName>
        <fullName evidence="1">Acyl-phosphate--glycerol-3-phosphate acyltransferase</fullName>
    </alternativeName>
    <alternativeName>
        <fullName evidence="1">G3P acyltransferase</fullName>
        <shortName evidence="1">GPAT</shortName>
        <ecNumber evidence="1">2.3.1.275</ecNumber>
    </alternativeName>
    <alternativeName>
        <fullName evidence="1">Lysophosphatidic acid synthase</fullName>
        <shortName evidence="1">LPA synthase</shortName>
    </alternativeName>
</protein>
<keyword id="KW-0997">Cell inner membrane</keyword>
<keyword id="KW-1003">Cell membrane</keyword>
<keyword id="KW-0444">Lipid biosynthesis</keyword>
<keyword id="KW-0443">Lipid metabolism</keyword>
<keyword id="KW-0472">Membrane</keyword>
<keyword id="KW-0594">Phospholipid biosynthesis</keyword>
<keyword id="KW-1208">Phospholipid metabolism</keyword>
<keyword id="KW-0808">Transferase</keyword>
<keyword id="KW-0812">Transmembrane</keyword>
<keyword id="KW-1133">Transmembrane helix</keyword>
<gene>
    <name evidence="1" type="primary">plsY</name>
    <name type="ordered locus">BURPS1710b_1070</name>
</gene>
<comment type="function">
    <text evidence="1">Catalyzes the transfer of an acyl group from acyl-phosphate (acyl-PO(4)) to glycerol-3-phosphate (G3P) to form lysophosphatidic acid (LPA). This enzyme utilizes acyl-phosphate as fatty acyl donor, but not acyl-CoA or acyl-ACP.</text>
</comment>
<comment type="catalytic activity">
    <reaction evidence="1">
        <text>an acyl phosphate + sn-glycerol 3-phosphate = a 1-acyl-sn-glycero-3-phosphate + phosphate</text>
        <dbReference type="Rhea" id="RHEA:34075"/>
        <dbReference type="ChEBI" id="CHEBI:43474"/>
        <dbReference type="ChEBI" id="CHEBI:57597"/>
        <dbReference type="ChEBI" id="CHEBI:57970"/>
        <dbReference type="ChEBI" id="CHEBI:59918"/>
        <dbReference type="EC" id="2.3.1.275"/>
    </reaction>
</comment>
<comment type="pathway">
    <text evidence="1">Lipid metabolism; phospholipid metabolism.</text>
</comment>
<comment type="subunit">
    <text evidence="1">Probably interacts with PlsX.</text>
</comment>
<comment type="subcellular location">
    <subcellularLocation>
        <location evidence="1">Cell inner membrane</location>
        <topology evidence="1">Multi-pass membrane protein</topology>
    </subcellularLocation>
</comment>
<comment type="similarity">
    <text evidence="1">Belongs to the PlsY family.</text>
</comment>
<comment type="sequence caution" evidence="2">
    <conflict type="erroneous initiation">
        <sequence resource="EMBL-CDS" id="ABA47959"/>
    </conflict>
</comment>
<organism>
    <name type="scientific">Burkholderia pseudomallei (strain 1710b)</name>
    <dbReference type="NCBI Taxonomy" id="320372"/>
    <lineage>
        <taxon>Bacteria</taxon>
        <taxon>Pseudomonadati</taxon>
        <taxon>Pseudomonadota</taxon>
        <taxon>Betaproteobacteria</taxon>
        <taxon>Burkholderiales</taxon>
        <taxon>Burkholderiaceae</taxon>
        <taxon>Burkholderia</taxon>
        <taxon>pseudomallei group</taxon>
    </lineage>
</organism>
<evidence type="ECO:0000255" key="1">
    <source>
        <dbReference type="HAMAP-Rule" id="MF_01043"/>
    </source>
</evidence>
<evidence type="ECO:0000305" key="2"/>
<name>PLSY_BURP1</name>
<accession>Q3JVC1</accession>
<reference key="1">
    <citation type="journal article" date="2010" name="Genome Biol. Evol.">
        <title>Continuing evolution of Burkholderia mallei through genome reduction and large-scale rearrangements.</title>
        <authorList>
            <person name="Losada L."/>
            <person name="Ronning C.M."/>
            <person name="DeShazer D."/>
            <person name="Woods D."/>
            <person name="Fedorova N."/>
            <person name="Kim H.S."/>
            <person name="Shabalina S.A."/>
            <person name="Pearson T.R."/>
            <person name="Brinkac L."/>
            <person name="Tan P."/>
            <person name="Nandi T."/>
            <person name="Crabtree J."/>
            <person name="Badger J."/>
            <person name="Beckstrom-Sternberg S."/>
            <person name="Saqib M."/>
            <person name="Schutzer S.E."/>
            <person name="Keim P."/>
            <person name="Nierman W.C."/>
        </authorList>
    </citation>
    <scope>NUCLEOTIDE SEQUENCE [LARGE SCALE GENOMIC DNA]</scope>
    <source>
        <strain>1710b</strain>
    </source>
</reference>
<dbReference type="EC" id="2.3.1.275" evidence="1"/>
<dbReference type="EMBL" id="CP000124">
    <property type="protein sequence ID" value="ABA47959.1"/>
    <property type="status" value="ALT_INIT"/>
    <property type="molecule type" value="Genomic_DNA"/>
</dbReference>
<dbReference type="RefSeq" id="WP_004526262.1">
    <property type="nucleotide sequence ID" value="NC_007434.1"/>
</dbReference>
<dbReference type="SMR" id="Q3JVC1"/>
<dbReference type="EnsemblBacteria" id="ABA47959">
    <property type="protein sequence ID" value="ABA47959"/>
    <property type="gene ID" value="BURPS1710b_1070"/>
</dbReference>
<dbReference type="KEGG" id="bpm:BURPS1710b_1070"/>
<dbReference type="HOGENOM" id="CLU_081254_0_0_4"/>
<dbReference type="UniPathway" id="UPA00085"/>
<dbReference type="Proteomes" id="UP000002700">
    <property type="component" value="Chromosome I"/>
</dbReference>
<dbReference type="GO" id="GO:0005886">
    <property type="term" value="C:plasma membrane"/>
    <property type="evidence" value="ECO:0007669"/>
    <property type="project" value="UniProtKB-SubCell"/>
</dbReference>
<dbReference type="GO" id="GO:0043772">
    <property type="term" value="F:acyl-phosphate glycerol-3-phosphate acyltransferase activity"/>
    <property type="evidence" value="ECO:0007669"/>
    <property type="project" value="UniProtKB-UniRule"/>
</dbReference>
<dbReference type="GO" id="GO:0008654">
    <property type="term" value="P:phospholipid biosynthetic process"/>
    <property type="evidence" value="ECO:0007669"/>
    <property type="project" value="UniProtKB-UniRule"/>
</dbReference>
<dbReference type="HAMAP" id="MF_01043">
    <property type="entry name" value="PlsY"/>
    <property type="match status" value="1"/>
</dbReference>
<dbReference type="InterPro" id="IPR003811">
    <property type="entry name" value="G3P_acylTferase_PlsY"/>
</dbReference>
<dbReference type="NCBIfam" id="TIGR00023">
    <property type="entry name" value="glycerol-3-phosphate 1-O-acyltransferase PlsY"/>
    <property type="match status" value="1"/>
</dbReference>
<dbReference type="PANTHER" id="PTHR30309:SF0">
    <property type="entry name" value="GLYCEROL-3-PHOSPHATE ACYLTRANSFERASE-RELATED"/>
    <property type="match status" value="1"/>
</dbReference>
<dbReference type="PANTHER" id="PTHR30309">
    <property type="entry name" value="INNER MEMBRANE PROTEIN YGIH"/>
    <property type="match status" value="1"/>
</dbReference>
<dbReference type="Pfam" id="PF02660">
    <property type="entry name" value="G3P_acyltransf"/>
    <property type="match status" value="1"/>
</dbReference>
<dbReference type="SMART" id="SM01207">
    <property type="entry name" value="G3P_acyltransf"/>
    <property type="match status" value="1"/>
</dbReference>
<proteinExistence type="inferred from homology"/>
<sequence>MQILLATVAAYLIGSVSFAVVVSAAMGLADPRSYGSKNPGATNVLRSGNKKAAILTLVGDAFKGWLAVWLVKRFGIGGEIGVALAAIAVFLGHLYPVFFRFQGGKGVATAAGVLLAVHPVLGLATALTWLIVAFFFRYSSLAALVAAVFAPIFDVFLFGTHDNPVAWAVLAMSVLLIWRHRSNISKLLAGEESRIGQKKKTGA</sequence>
<feature type="chain" id="PRO_0000250289" description="Glycerol-3-phosphate acyltransferase">
    <location>
        <begin position="1"/>
        <end position="203"/>
    </location>
</feature>
<feature type="transmembrane region" description="Helical" evidence="1">
    <location>
        <begin position="3"/>
        <end position="23"/>
    </location>
</feature>
<feature type="transmembrane region" description="Helical" evidence="1">
    <location>
        <begin position="51"/>
        <end position="71"/>
    </location>
</feature>
<feature type="transmembrane region" description="Helical" evidence="1">
    <location>
        <begin position="74"/>
        <end position="94"/>
    </location>
</feature>
<feature type="transmembrane region" description="Helical" evidence="1">
    <location>
        <begin position="116"/>
        <end position="136"/>
    </location>
</feature>
<feature type="transmembrane region" description="Helical" evidence="1">
    <location>
        <begin position="140"/>
        <end position="160"/>
    </location>
</feature>
<feature type="transmembrane region" description="Helical" evidence="1">
    <location>
        <begin position="164"/>
        <end position="178"/>
    </location>
</feature>